<feature type="chain" id="PRO_0000239765" description="Synaptic vesicle glycoprotein 2A">
    <location>
        <begin position="1"/>
        <end position="742"/>
    </location>
</feature>
<feature type="topological domain" description="Cytoplasmic" evidence="5">
    <location>
        <begin position="1"/>
        <end position="169"/>
    </location>
</feature>
<feature type="transmembrane region" description="Helical" evidence="5">
    <location>
        <begin position="170"/>
        <end position="190"/>
    </location>
</feature>
<feature type="topological domain" description="Extracellular" evidence="5">
    <location>
        <begin position="191"/>
        <end position="205"/>
    </location>
</feature>
<feature type="transmembrane region" description="Helical" evidence="5">
    <location>
        <begin position="206"/>
        <end position="226"/>
    </location>
</feature>
<feature type="topological domain" description="Cytoplasmic" evidence="5">
    <location>
        <begin position="227"/>
        <end position="233"/>
    </location>
</feature>
<feature type="transmembrane region" description="Helical" evidence="5">
    <location>
        <begin position="234"/>
        <end position="254"/>
    </location>
</feature>
<feature type="topological domain" description="Extracellular" evidence="5">
    <location>
        <begin position="255"/>
        <end position="262"/>
    </location>
</feature>
<feature type="transmembrane region" description="Helical" evidence="5">
    <location>
        <begin position="263"/>
        <end position="283"/>
    </location>
</feature>
<feature type="topological domain" description="Cytoplasmic" evidence="5">
    <location>
        <begin position="284"/>
        <end position="294"/>
    </location>
</feature>
<feature type="transmembrane region" description="Helical" evidence="5">
    <location>
        <begin position="295"/>
        <end position="315"/>
    </location>
</feature>
<feature type="topological domain" description="Extracellular" evidence="5">
    <location>
        <begin position="316"/>
        <end position="334"/>
    </location>
</feature>
<feature type="transmembrane region" description="Helical" evidence="5">
    <location>
        <begin position="335"/>
        <end position="355"/>
    </location>
</feature>
<feature type="topological domain" description="Cytoplasmic" evidence="5">
    <location>
        <begin position="356"/>
        <end position="447"/>
    </location>
</feature>
<feature type="transmembrane region" description="Helical" evidence="5">
    <location>
        <begin position="448"/>
        <end position="468"/>
    </location>
</feature>
<feature type="topological domain" description="Extracellular" evidence="5">
    <location>
        <begin position="469"/>
        <end position="598"/>
    </location>
</feature>
<feature type="transmembrane region" description="Helical" evidence="5">
    <location>
        <begin position="599"/>
        <end position="619"/>
    </location>
</feature>
<feature type="topological domain" description="Cytoplasmic" evidence="5">
    <location>
        <begin position="620"/>
        <end position="626"/>
    </location>
</feature>
<feature type="transmembrane region" description="Helical" evidence="5">
    <location>
        <begin position="627"/>
        <end position="647"/>
    </location>
</feature>
<feature type="topological domain" description="Extracellular" evidence="5">
    <location>
        <begin position="648"/>
        <end position="651"/>
    </location>
</feature>
<feature type="transmembrane region" description="Helical" evidence="5">
    <location>
        <begin position="652"/>
        <end position="672"/>
    </location>
</feature>
<feature type="topological domain" description="Cytoplasmic" evidence="5">
    <location>
        <begin position="673"/>
        <end position="690"/>
    </location>
</feature>
<feature type="transmembrane region" description="Helical" evidence="5">
    <location>
        <begin position="691"/>
        <end position="711"/>
    </location>
</feature>
<feature type="topological domain" description="Extracellular" evidence="5">
    <location>
        <position position="712"/>
    </location>
</feature>
<feature type="transmembrane region" description="Helical" evidence="5">
    <location>
        <begin position="713"/>
        <end position="733"/>
    </location>
</feature>
<feature type="topological domain" description="Cytoplasmic" evidence="5">
    <location>
        <begin position="734"/>
        <end position="742"/>
    </location>
</feature>
<feature type="region of interest" description="Interaction with SYT1" evidence="1">
    <location>
        <begin position="1"/>
        <end position="57"/>
    </location>
</feature>
<feature type="region of interest" description="Disordered" evidence="6">
    <location>
        <begin position="33"/>
        <end position="144"/>
    </location>
</feature>
<feature type="compositionally biased region" description="Basic and acidic residues" evidence="6">
    <location>
        <begin position="33"/>
        <end position="49"/>
    </location>
</feature>
<feature type="compositionally biased region" description="Gly residues" evidence="6">
    <location>
        <begin position="122"/>
        <end position="137"/>
    </location>
</feature>
<feature type="modified residue" description="Phosphoserine" evidence="3">
    <location>
        <position position="80"/>
    </location>
</feature>
<feature type="modified residue" description="Phosphoserine" evidence="3">
    <location>
        <position position="81"/>
    </location>
</feature>
<feature type="modified residue" description="Phosphothreonine" evidence="3">
    <location>
        <position position="84"/>
    </location>
</feature>
<feature type="modified residue" description="Phosphoserine" evidence="4">
    <location>
        <position position="127"/>
    </location>
</feature>
<feature type="modified residue" description="Phosphoserine" evidence="2">
    <location>
        <position position="393"/>
    </location>
</feature>
<feature type="modified residue" description="Phosphotyrosine" evidence="4">
    <location>
        <position position="480"/>
    </location>
</feature>
<feature type="glycosylation site" description="N-linked (GlcNAc...) asparagine" evidence="5">
    <location>
        <position position="498"/>
    </location>
</feature>
<feature type="glycosylation site" description="N-linked (GlcNAc...) asparagine" evidence="5">
    <location>
        <position position="548"/>
    </location>
</feature>
<feature type="glycosylation site" description="N-linked (GlcNAc...) asparagine" evidence="5">
    <location>
        <position position="573"/>
    </location>
</feature>
<accession>Q4R4X3</accession>
<name>SV2A_MACFA</name>
<comment type="function">
    <text evidence="1">Plays a role in the control of regulated secretion in neural and endocrine cells, enhancing selectively low-frequency neurotransmission. Positively regulates vesicle fusion by maintaining the readily releasable pool of secretory vesicles (By similarity).</text>
</comment>
<comment type="subunit">
    <text evidence="1">Interacts with SYT1/synaptotagmin-1 in a calcium-dependent manner. Binds the adapter protein complex AP-2 (By similarity).</text>
</comment>
<comment type="subcellular location">
    <subcellularLocation>
        <location evidence="4">Presynapse</location>
    </subcellularLocation>
    <subcellularLocation>
        <location evidence="2">Cytoplasmic vesicle</location>
        <location evidence="2">Secretory vesicle</location>
        <location evidence="2">Synaptic vesicle membrane</location>
        <topology evidence="2">Multi-pass membrane protein</topology>
    </subcellularLocation>
    <text evidence="2 4">Enriched in chromaffin granules, not present in adrenal microsomes. Associated with both insulin granules and synaptic-like microvesicles in insulin-secreting cells of the pancreas (By similarity). Colocalizes with ATP2B1 at photoreceptor synaptic terminals.</text>
</comment>
<comment type="PTM">
    <text evidence="1">Phosphorylation by CK1 of the N-terminal cytoplasmic domain regulates interaction with SYT1.</text>
</comment>
<comment type="PTM">
    <text evidence="1">N-glycosylated.</text>
</comment>
<comment type="similarity">
    <text evidence="7">Belongs to the major facilitator superfamily.</text>
</comment>
<evidence type="ECO:0000250" key="1"/>
<evidence type="ECO:0000250" key="2">
    <source>
        <dbReference type="UniProtKB" id="Q02563"/>
    </source>
</evidence>
<evidence type="ECO:0000250" key="3">
    <source>
        <dbReference type="UniProtKB" id="Q7L0J3"/>
    </source>
</evidence>
<evidence type="ECO:0000250" key="4">
    <source>
        <dbReference type="UniProtKB" id="Q9JIS5"/>
    </source>
</evidence>
<evidence type="ECO:0000255" key="5"/>
<evidence type="ECO:0000256" key="6">
    <source>
        <dbReference type="SAM" id="MobiDB-lite"/>
    </source>
</evidence>
<evidence type="ECO:0000305" key="7"/>
<keyword id="KW-0966">Cell projection</keyword>
<keyword id="KW-0968">Cytoplasmic vesicle</keyword>
<keyword id="KW-0325">Glycoprotein</keyword>
<keyword id="KW-0472">Membrane</keyword>
<keyword id="KW-0532">Neurotransmitter transport</keyword>
<keyword id="KW-0597">Phosphoprotein</keyword>
<keyword id="KW-1185">Reference proteome</keyword>
<keyword id="KW-0770">Synapse</keyword>
<keyword id="KW-0812">Transmembrane</keyword>
<keyword id="KW-1133">Transmembrane helix</keyword>
<keyword id="KW-0813">Transport</keyword>
<proteinExistence type="evidence at transcript level"/>
<reference key="1">
    <citation type="submission" date="2005-06" db="EMBL/GenBank/DDBJ databases">
        <title>DNA sequences of macaque genes expressed in brain or testis and its evolutionary implications.</title>
        <authorList>
            <consortium name="International consortium for macaque cDNA sequencing and analysis"/>
        </authorList>
    </citation>
    <scope>NUCLEOTIDE SEQUENCE [LARGE SCALE MRNA]</scope>
    <source>
        <tissue>Temporal cortex</tissue>
    </source>
</reference>
<organism>
    <name type="scientific">Macaca fascicularis</name>
    <name type="common">Crab-eating macaque</name>
    <name type="synonym">Cynomolgus monkey</name>
    <dbReference type="NCBI Taxonomy" id="9541"/>
    <lineage>
        <taxon>Eukaryota</taxon>
        <taxon>Metazoa</taxon>
        <taxon>Chordata</taxon>
        <taxon>Craniata</taxon>
        <taxon>Vertebrata</taxon>
        <taxon>Euteleostomi</taxon>
        <taxon>Mammalia</taxon>
        <taxon>Eutheria</taxon>
        <taxon>Euarchontoglires</taxon>
        <taxon>Primates</taxon>
        <taxon>Haplorrhini</taxon>
        <taxon>Catarrhini</taxon>
        <taxon>Cercopithecidae</taxon>
        <taxon>Cercopithecinae</taxon>
        <taxon>Macaca</taxon>
    </lineage>
</organism>
<protein>
    <recommendedName>
        <fullName>Synaptic vesicle glycoprotein 2A</fullName>
    </recommendedName>
</protein>
<dbReference type="EMBL" id="AB169771">
    <property type="protein sequence ID" value="BAE01852.1"/>
    <property type="molecule type" value="mRNA"/>
</dbReference>
<dbReference type="RefSeq" id="NP_001270965.1">
    <property type="nucleotide sequence ID" value="NM_001284036.1"/>
</dbReference>
<dbReference type="SMR" id="Q4R4X3"/>
<dbReference type="STRING" id="9541.ENSMFAP00000036369"/>
<dbReference type="GlyCosmos" id="Q4R4X3">
    <property type="glycosylation" value="3 sites, No reported glycans"/>
</dbReference>
<dbReference type="eggNOG" id="KOG0255">
    <property type="taxonomic scope" value="Eukaryota"/>
</dbReference>
<dbReference type="Proteomes" id="UP000233100">
    <property type="component" value="Unplaced"/>
</dbReference>
<dbReference type="GO" id="GO:0043005">
    <property type="term" value="C:neuron projection"/>
    <property type="evidence" value="ECO:0007669"/>
    <property type="project" value="TreeGrafter"/>
</dbReference>
<dbReference type="GO" id="GO:0030672">
    <property type="term" value="C:synaptic vesicle membrane"/>
    <property type="evidence" value="ECO:0007669"/>
    <property type="project" value="UniProtKB-SubCell"/>
</dbReference>
<dbReference type="GO" id="GO:0022857">
    <property type="term" value="F:transmembrane transporter activity"/>
    <property type="evidence" value="ECO:0007669"/>
    <property type="project" value="InterPro"/>
</dbReference>
<dbReference type="GO" id="GO:0007268">
    <property type="term" value="P:chemical synaptic transmission"/>
    <property type="evidence" value="ECO:0007669"/>
    <property type="project" value="InterPro"/>
</dbReference>
<dbReference type="GO" id="GO:0006836">
    <property type="term" value="P:neurotransmitter transport"/>
    <property type="evidence" value="ECO:0007669"/>
    <property type="project" value="UniProtKB-KW"/>
</dbReference>
<dbReference type="FunFam" id="1.20.1250.20:FF:000009">
    <property type="entry name" value="Synaptic vesicle glycoprotein 2A"/>
    <property type="match status" value="1"/>
</dbReference>
<dbReference type="FunFam" id="2.160.20.80:FF:000001">
    <property type="entry name" value="Synaptic vesicle glycoprotein 2A"/>
    <property type="match status" value="1"/>
</dbReference>
<dbReference type="FunFam" id="1.20.1250.20:FF:000014">
    <property type="entry name" value="synaptic vesicle glycoprotein 2A"/>
    <property type="match status" value="1"/>
</dbReference>
<dbReference type="Gene3D" id="2.160.20.80">
    <property type="entry name" value="E3 ubiquitin-protein ligase SopA"/>
    <property type="match status" value="1"/>
</dbReference>
<dbReference type="Gene3D" id="1.20.1250.20">
    <property type="entry name" value="MFS general substrate transporter like domains"/>
    <property type="match status" value="2"/>
</dbReference>
<dbReference type="InterPro" id="IPR055415">
    <property type="entry name" value="LD_SV2"/>
</dbReference>
<dbReference type="InterPro" id="IPR011701">
    <property type="entry name" value="MFS"/>
</dbReference>
<dbReference type="InterPro" id="IPR020846">
    <property type="entry name" value="MFS_dom"/>
</dbReference>
<dbReference type="InterPro" id="IPR005828">
    <property type="entry name" value="MFS_sugar_transport-like"/>
</dbReference>
<dbReference type="InterPro" id="IPR036259">
    <property type="entry name" value="MFS_trans_sf"/>
</dbReference>
<dbReference type="InterPro" id="IPR005829">
    <property type="entry name" value="Sugar_transporter_CS"/>
</dbReference>
<dbReference type="InterPro" id="IPR022308">
    <property type="entry name" value="SV2"/>
</dbReference>
<dbReference type="NCBIfam" id="TIGR01299">
    <property type="entry name" value="synapt_SV2"/>
    <property type="match status" value="1"/>
</dbReference>
<dbReference type="PANTHER" id="PTHR23511">
    <property type="entry name" value="SYNAPTIC VESICLE GLYCOPROTEIN 2"/>
    <property type="match status" value="1"/>
</dbReference>
<dbReference type="PANTHER" id="PTHR23511:SF11">
    <property type="entry name" value="SYNAPTIC VESICLE GLYCOPROTEIN 2A"/>
    <property type="match status" value="1"/>
</dbReference>
<dbReference type="Pfam" id="PF23894">
    <property type="entry name" value="LD_SV2"/>
    <property type="match status" value="1"/>
</dbReference>
<dbReference type="Pfam" id="PF07690">
    <property type="entry name" value="MFS_1"/>
    <property type="match status" value="1"/>
</dbReference>
<dbReference type="Pfam" id="PF00083">
    <property type="entry name" value="Sugar_tr"/>
    <property type="match status" value="1"/>
</dbReference>
<dbReference type="SUPFAM" id="SSF103473">
    <property type="entry name" value="MFS general substrate transporter"/>
    <property type="match status" value="2"/>
</dbReference>
<dbReference type="SUPFAM" id="SSF141571">
    <property type="entry name" value="Pentapeptide repeat-like"/>
    <property type="match status" value="1"/>
</dbReference>
<dbReference type="PROSITE" id="PS50850">
    <property type="entry name" value="MFS"/>
    <property type="match status" value="1"/>
</dbReference>
<gene>
    <name type="primary">SV2A</name>
    <name type="ORF">QtrA-12160</name>
</gene>
<sequence>MEEGFRDRAAFIRGAKDIAKEVKKHAAKKVVKGLDRVQDEYSRRSYSRFEEEDDDDDFPAPSDSYYRGEGTQDEEEGGASSDATEGHDEDDEIYEGEYQGIPRAESGGKGERMADGAPLAGVRGGLSDGEGPPGGRGEAQRRKEREELAQQYEAILRECGHGRFQWTLYFVLGLALMADGVEVFVVGFVLPSAEKDMCLSDSNKGMLGLIVYLGMMVGAFLWGGLADRLGRRQCLLISLSVNSVFAFFSSFVQGYGTFLFCRLLSGVGIGGSIPIVFSYFSEFLAQEKRGEHLSWLCMFWMIGGVYAAAMAWAIIPHYGWSFQMGSAYQFHSWRVFVLVCAFPSVFAIGALTTQPESPRFFLENGKHDEAWMVLKQVHDTNMRAKGHPERVFSVTHIKTIHQEDELIEIQSDTGTWYQRWGVRALSLGGQVWGNFLSCFGPEYRRITLMMMGVWFTMSFSYYGLTVWFPDMIRHLQAVDYASRTKVFPGERVEHVTFNFTLENQIHRGGQYFNDKFIGLRLKSVSFEDSLFEECYFEDVTSSNTFFRNCTFINTVFYNTDLFEYKFVNSRLVNSTFLHNKEGCPLDVTGTGEGAYMVYFVSFLGTLAVLPGNIVSALLMDKIGRLRMLAGSSVMSCVSCFFLSFGNSESAMIALLCLFGGVSIASWNALDVLTVGLYPSDKRTTAFGFLNALCKLAAVLGISIFTSFVGITKAAPIPFASAALALGSSLALKLPETRGQVLQ</sequence>